<gene>
    <name evidence="1" type="primary">ispG</name>
    <name type="ordered locus">cbdbA311</name>
</gene>
<evidence type="ECO:0000255" key="1">
    <source>
        <dbReference type="HAMAP-Rule" id="MF_00159"/>
    </source>
</evidence>
<proteinExistence type="inferred from homology"/>
<dbReference type="EC" id="1.17.7.3" evidence="1"/>
<dbReference type="EMBL" id="AJ965256">
    <property type="protein sequence ID" value="CAI82537.1"/>
    <property type="molecule type" value="Genomic_DNA"/>
</dbReference>
<dbReference type="RefSeq" id="WP_011308894.1">
    <property type="nucleotide sequence ID" value="NC_007356.1"/>
</dbReference>
<dbReference type="SMR" id="Q3ZZC9"/>
<dbReference type="KEGG" id="deh:cbdbA311"/>
<dbReference type="HOGENOM" id="CLU_042258_0_0_0"/>
<dbReference type="UniPathway" id="UPA00056">
    <property type="reaction ID" value="UER00096"/>
</dbReference>
<dbReference type="Proteomes" id="UP000000433">
    <property type="component" value="Chromosome"/>
</dbReference>
<dbReference type="GO" id="GO:0051539">
    <property type="term" value="F:4 iron, 4 sulfur cluster binding"/>
    <property type="evidence" value="ECO:0007669"/>
    <property type="project" value="UniProtKB-UniRule"/>
</dbReference>
<dbReference type="GO" id="GO:0046429">
    <property type="term" value="F:4-hydroxy-3-methylbut-2-en-1-yl diphosphate synthase activity (ferredoxin)"/>
    <property type="evidence" value="ECO:0007669"/>
    <property type="project" value="UniProtKB-UniRule"/>
</dbReference>
<dbReference type="GO" id="GO:0141197">
    <property type="term" value="F:4-hydroxy-3-methylbut-2-enyl-diphosphate synthase activity (flavodoxin)"/>
    <property type="evidence" value="ECO:0007669"/>
    <property type="project" value="UniProtKB-EC"/>
</dbReference>
<dbReference type="GO" id="GO:0005506">
    <property type="term" value="F:iron ion binding"/>
    <property type="evidence" value="ECO:0007669"/>
    <property type="project" value="InterPro"/>
</dbReference>
<dbReference type="GO" id="GO:0019288">
    <property type="term" value="P:isopentenyl diphosphate biosynthetic process, methylerythritol 4-phosphate pathway"/>
    <property type="evidence" value="ECO:0007669"/>
    <property type="project" value="UniProtKB-UniRule"/>
</dbReference>
<dbReference type="GO" id="GO:0016114">
    <property type="term" value="P:terpenoid biosynthetic process"/>
    <property type="evidence" value="ECO:0007669"/>
    <property type="project" value="InterPro"/>
</dbReference>
<dbReference type="FunFam" id="3.20.20.20:FF:000001">
    <property type="entry name" value="4-hydroxy-3-methylbut-2-en-1-yl diphosphate synthase (flavodoxin)"/>
    <property type="match status" value="1"/>
</dbReference>
<dbReference type="Gene3D" id="3.20.20.20">
    <property type="entry name" value="Dihydropteroate synthase-like"/>
    <property type="match status" value="1"/>
</dbReference>
<dbReference type="Gene3D" id="3.30.413.10">
    <property type="entry name" value="Sulfite Reductase Hemoprotein, domain 1"/>
    <property type="match status" value="1"/>
</dbReference>
<dbReference type="HAMAP" id="MF_00159">
    <property type="entry name" value="IspG"/>
    <property type="match status" value="1"/>
</dbReference>
<dbReference type="InterPro" id="IPR011005">
    <property type="entry name" value="Dihydropteroate_synth-like_sf"/>
</dbReference>
<dbReference type="InterPro" id="IPR016425">
    <property type="entry name" value="IspG_bac"/>
</dbReference>
<dbReference type="InterPro" id="IPR004588">
    <property type="entry name" value="IspG_bac-typ"/>
</dbReference>
<dbReference type="InterPro" id="IPR045854">
    <property type="entry name" value="NO2/SO3_Rdtase_4Fe4S_sf"/>
</dbReference>
<dbReference type="InterPro" id="IPR011060">
    <property type="entry name" value="RibuloseP-bd_barrel"/>
</dbReference>
<dbReference type="NCBIfam" id="TIGR00612">
    <property type="entry name" value="ispG_gcpE"/>
    <property type="match status" value="1"/>
</dbReference>
<dbReference type="NCBIfam" id="NF001540">
    <property type="entry name" value="PRK00366.1"/>
    <property type="match status" value="1"/>
</dbReference>
<dbReference type="PANTHER" id="PTHR30454">
    <property type="entry name" value="4-HYDROXY-3-METHYLBUT-2-EN-1-YL DIPHOSPHATE SYNTHASE"/>
    <property type="match status" value="1"/>
</dbReference>
<dbReference type="PANTHER" id="PTHR30454:SF0">
    <property type="entry name" value="4-HYDROXY-3-METHYLBUT-2-EN-1-YL DIPHOSPHATE SYNTHASE (FERREDOXIN), CHLOROPLASTIC"/>
    <property type="match status" value="1"/>
</dbReference>
<dbReference type="Pfam" id="PF04551">
    <property type="entry name" value="GcpE"/>
    <property type="match status" value="1"/>
</dbReference>
<dbReference type="PIRSF" id="PIRSF004640">
    <property type="entry name" value="IspG"/>
    <property type="match status" value="1"/>
</dbReference>
<dbReference type="SUPFAM" id="SSF56014">
    <property type="entry name" value="Nitrite and sulphite reductase 4Fe-4S domain-like"/>
    <property type="match status" value="1"/>
</dbReference>
<dbReference type="SUPFAM" id="SSF51366">
    <property type="entry name" value="Ribulose-phoshate binding barrel"/>
    <property type="match status" value="1"/>
</dbReference>
<organism>
    <name type="scientific">Dehalococcoides mccartyi (strain CBDB1)</name>
    <dbReference type="NCBI Taxonomy" id="255470"/>
    <lineage>
        <taxon>Bacteria</taxon>
        <taxon>Bacillati</taxon>
        <taxon>Chloroflexota</taxon>
        <taxon>Dehalococcoidia</taxon>
        <taxon>Dehalococcoidales</taxon>
        <taxon>Dehalococcoidaceae</taxon>
        <taxon>Dehalococcoides</taxon>
    </lineage>
</organism>
<feature type="chain" id="PRO_1000011460" description="4-hydroxy-3-methylbut-2-en-1-yl diphosphate synthase (flavodoxin)">
    <location>
        <begin position="1"/>
        <end position="348"/>
    </location>
</feature>
<feature type="binding site" evidence="1">
    <location>
        <position position="263"/>
    </location>
    <ligand>
        <name>[4Fe-4S] cluster</name>
        <dbReference type="ChEBI" id="CHEBI:49883"/>
    </ligand>
</feature>
<feature type="binding site" evidence="1">
    <location>
        <position position="266"/>
    </location>
    <ligand>
        <name>[4Fe-4S] cluster</name>
        <dbReference type="ChEBI" id="CHEBI:49883"/>
    </ligand>
</feature>
<feature type="binding site" evidence="1">
    <location>
        <position position="298"/>
    </location>
    <ligand>
        <name>[4Fe-4S] cluster</name>
        <dbReference type="ChEBI" id="CHEBI:49883"/>
    </ligand>
</feature>
<feature type="binding site" evidence="1">
    <location>
        <position position="305"/>
    </location>
    <ligand>
        <name>[4Fe-4S] cluster</name>
        <dbReference type="ChEBI" id="CHEBI:49883"/>
    </ligand>
</feature>
<accession>Q3ZZC9</accession>
<protein>
    <recommendedName>
        <fullName evidence="1">4-hydroxy-3-methylbut-2-en-1-yl diphosphate synthase (flavodoxin)</fullName>
        <ecNumber evidence="1">1.17.7.3</ecNumber>
    </recommendedName>
    <alternativeName>
        <fullName evidence="1">1-hydroxy-2-methyl-2-(E)-butenyl 4-diphosphate synthase</fullName>
    </alternativeName>
</protein>
<name>ISPG_DEHMC</name>
<sequence>MITRRQSTEIRLGNLTIGGSAPISVQSMTKTDTRNIPATIAQIKELEECGCEIIRLAIPDMEAASALKSIRPKVKIPIVADIHFDYRLALASLSAGVDGLRLNPGNIGDPERVKAVVKSAKEREIPIRIGVNAGSLPKDLPPELTIAQKMVKAAMGHIKILEGLDFGLIKVSLKAFDVPTTIEAYTQIASLIPYPLHVGITETGTPKTGLVRSAVGIGNLLYMGIGDTIRVSLTAPPQEEVFAAYEILKSLNLRQRGPILVSCPTCSRTEVDIVGIASRVQEALNKIDKPIRVAVMGCAVNGPGESKEADLGIACGKGQGLLFRKGEKIAVVPEDELVDALLREIASL</sequence>
<reference key="1">
    <citation type="journal article" date="2005" name="Nat. Biotechnol.">
        <title>Genome sequence of the chlorinated compound-respiring bacterium Dehalococcoides species strain CBDB1.</title>
        <authorList>
            <person name="Kube M."/>
            <person name="Beck A."/>
            <person name="Zinder S.H."/>
            <person name="Kuhl H."/>
            <person name="Reinhardt R."/>
            <person name="Adrian L."/>
        </authorList>
    </citation>
    <scope>NUCLEOTIDE SEQUENCE [LARGE SCALE GENOMIC DNA]</scope>
    <source>
        <strain>CBDB1</strain>
    </source>
</reference>
<keyword id="KW-0004">4Fe-4S</keyword>
<keyword id="KW-0408">Iron</keyword>
<keyword id="KW-0411">Iron-sulfur</keyword>
<keyword id="KW-0414">Isoprene biosynthesis</keyword>
<keyword id="KW-0479">Metal-binding</keyword>
<keyword id="KW-0560">Oxidoreductase</keyword>
<comment type="function">
    <text evidence="1">Converts 2C-methyl-D-erythritol 2,4-cyclodiphosphate (ME-2,4cPP) into 1-hydroxy-2-methyl-2-(E)-butenyl 4-diphosphate.</text>
</comment>
<comment type="catalytic activity">
    <reaction evidence="1">
        <text>(2E)-4-hydroxy-3-methylbut-2-enyl diphosphate + oxidized [flavodoxin] + H2O + 2 H(+) = 2-C-methyl-D-erythritol 2,4-cyclic diphosphate + reduced [flavodoxin]</text>
        <dbReference type="Rhea" id="RHEA:43604"/>
        <dbReference type="Rhea" id="RHEA-COMP:10622"/>
        <dbReference type="Rhea" id="RHEA-COMP:10623"/>
        <dbReference type="ChEBI" id="CHEBI:15377"/>
        <dbReference type="ChEBI" id="CHEBI:15378"/>
        <dbReference type="ChEBI" id="CHEBI:57618"/>
        <dbReference type="ChEBI" id="CHEBI:58210"/>
        <dbReference type="ChEBI" id="CHEBI:58483"/>
        <dbReference type="ChEBI" id="CHEBI:128753"/>
        <dbReference type="EC" id="1.17.7.3"/>
    </reaction>
</comment>
<comment type="cofactor">
    <cofactor evidence="1">
        <name>[4Fe-4S] cluster</name>
        <dbReference type="ChEBI" id="CHEBI:49883"/>
    </cofactor>
    <text evidence="1">Binds 1 [4Fe-4S] cluster.</text>
</comment>
<comment type="pathway">
    <text evidence="1">Isoprenoid biosynthesis; isopentenyl diphosphate biosynthesis via DXP pathway; isopentenyl diphosphate from 1-deoxy-D-xylulose 5-phosphate: step 5/6.</text>
</comment>
<comment type="similarity">
    <text evidence="1">Belongs to the IspG family.</text>
</comment>